<evidence type="ECO:0000250" key="1"/>
<evidence type="ECO:0000255" key="2"/>
<evidence type="ECO:0000255" key="3">
    <source>
        <dbReference type="PROSITE-ProRule" id="PRU00031"/>
    </source>
</evidence>
<evidence type="ECO:0000305" key="4"/>
<name>VKTC5_DABSI</name>
<comment type="function">
    <text evidence="1">Serine protease inhibitor that inhibits trypsin.</text>
</comment>
<comment type="subcellular location">
    <subcellularLocation>
        <location evidence="1">Secreted</location>
    </subcellularLocation>
</comment>
<comment type="tissue specificity">
    <text>Expressed by the venom gland.</text>
</comment>
<comment type="similarity">
    <text evidence="4">Belongs to the venom Kunitz-type family.</text>
</comment>
<reference key="1">
    <citation type="submission" date="2006-11" db="EMBL/GenBank/DDBJ databases">
        <title>BPTI petides from Chinese Daboia russellii siamensis.</title>
        <authorList>
            <person name="Guo C."/>
            <person name="McClean S."/>
            <person name="Shaw C."/>
            <person name="Rao P."/>
            <person name="Ye M."/>
            <person name="Anthony John B."/>
        </authorList>
    </citation>
    <scope>NUCLEOTIDE SEQUENCE [MRNA]</scope>
    <source>
        <strain>China</strain>
        <tissue>Venom gland</tissue>
    </source>
</reference>
<accession>A8Y7N8</accession>
<organism>
    <name type="scientific">Daboia siamensis</name>
    <name type="common">Eastern Russel's viper</name>
    <name type="synonym">Daboia russelii siamensis</name>
    <dbReference type="NCBI Taxonomy" id="343250"/>
    <lineage>
        <taxon>Eukaryota</taxon>
        <taxon>Metazoa</taxon>
        <taxon>Chordata</taxon>
        <taxon>Craniata</taxon>
        <taxon>Vertebrata</taxon>
        <taxon>Euteleostomi</taxon>
        <taxon>Lepidosauria</taxon>
        <taxon>Squamata</taxon>
        <taxon>Bifurcata</taxon>
        <taxon>Unidentata</taxon>
        <taxon>Episquamata</taxon>
        <taxon>Toxicofera</taxon>
        <taxon>Serpentes</taxon>
        <taxon>Colubroidea</taxon>
        <taxon>Viperidae</taxon>
        <taxon>Viperinae</taxon>
        <taxon>Daboia</taxon>
    </lineage>
</organism>
<proteinExistence type="evidence at transcript level"/>
<dbReference type="EMBL" id="AM411365">
    <property type="protein sequence ID" value="CAL69606.1"/>
    <property type="molecule type" value="mRNA"/>
</dbReference>
<dbReference type="SMR" id="A8Y7N8"/>
<dbReference type="GO" id="GO:0005576">
    <property type="term" value="C:extracellular region"/>
    <property type="evidence" value="ECO:0007669"/>
    <property type="project" value="UniProtKB-SubCell"/>
</dbReference>
<dbReference type="GO" id="GO:0004867">
    <property type="term" value="F:serine-type endopeptidase inhibitor activity"/>
    <property type="evidence" value="ECO:0007669"/>
    <property type="project" value="UniProtKB-KW"/>
</dbReference>
<dbReference type="FunFam" id="4.10.410.10:FF:000021">
    <property type="entry name" value="Serine protease inhibitor, putative"/>
    <property type="match status" value="1"/>
</dbReference>
<dbReference type="Gene3D" id="4.10.410.10">
    <property type="entry name" value="Pancreatic trypsin inhibitor Kunitz domain"/>
    <property type="match status" value="1"/>
</dbReference>
<dbReference type="InterPro" id="IPR002223">
    <property type="entry name" value="Kunitz_BPTI"/>
</dbReference>
<dbReference type="InterPro" id="IPR036880">
    <property type="entry name" value="Kunitz_BPTI_sf"/>
</dbReference>
<dbReference type="InterPro" id="IPR020901">
    <property type="entry name" value="Prtase_inh_Kunz-CS"/>
</dbReference>
<dbReference type="InterPro" id="IPR050098">
    <property type="entry name" value="TFPI/VKTCI-like"/>
</dbReference>
<dbReference type="PANTHER" id="PTHR10083">
    <property type="entry name" value="KUNITZ-TYPE PROTEASE INHIBITOR-RELATED"/>
    <property type="match status" value="1"/>
</dbReference>
<dbReference type="Pfam" id="PF00014">
    <property type="entry name" value="Kunitz_BPTI"/>
    <property type="match status" value="1"/>
</dbReference>
<dbReference type="PRINTS" id="PR00759">
    <property type="entry name" value="BASICPTASE"/>
</dbReference>
<dbReference type="SMART" id="SM00131">
    <property type="entry name" value="KU"/>
    <property type="match status" value="1"/>
</dbReference>
<dbReference type="SUPFAM" id="SSF57362">
    <property type="entry name" value="BPTI-like"/>
    <property type="match status" value="1"/>
</dbReference>
<dbReference type="PROSITE" id="PS00280">
    <property type="entry name" value="BPTI_KUNITZ_1"/>
    <property type="match status" value="1"/>
</dbReference>
<dbReference type="PROSITE" id="PS50279">
    <property type="entry name" value="BPTI_KUNITZ_2"/>
    <property type="match status" value="1"/>
</dbReference>
<feature type="signal peptide" evidence="1">
    <location>
        <begin position="1"/>
        <end position="24"/>
    </location>
</feature>
<feature type="chain" id="PRO_5000284431" description="Kunitz-type serine protease inhibitor C5">
    <location>
        <begin position="25"/>
        <end position="84"/>
    </location>
</feature>
<feature type="propeptide" id="PRO_0000377470" evidence="2">
    <location>
        <begin position="85"/>
        <end position="90"/>
    </location>
</feature>
<feature type="domain" description="BPTI/Kunitz inhibitor" evidence="3">
    <location>
        <begin position="31"/>
        <end position="81"/>
    </location>
</feature>
<feature type="site" description="Reactive bond for trypsin" evidence="1">
    <location>
        <begin position="41"/>
        <end position="42"/>
    </location>
</feature>
<feature type="disulfide bond" evidence="3">
    <location>
        <begin position="31"/>
        <end position="81"/>
    </location>
</feature>
<feature type="disulfide bond" evidence="3">
    <location>
        <begin position="40"/>
        <end position="64"/>
    </location>
</feature>
<feature type="disulfide bond" evidence="3">
    <location>
        <begin position="56"/>
        <end position="77"/>
    </location>
</feature>
<keyword id="KW-0165">Cleavage on pair of basic residues</keyword>
<keyword id="KW-1015">Disulfide bond</keyword>
<keyword id="KW-0646">Protease inhibitor</keyword>
<keyword id="KW-0964">Secreted</keyword>
<keyword id="KW-0722">Serine protease inhibitor</keyword>
<keyword id="KW-0732">Signal</keyword>
<sequence>MSSGGLLLLLALLTLWAELTPISGHDRPTFCNLAPESGRCRGHLRRIYYNPDSNKCEVFFYGGCGGNDNNFETRKKCRQTCGAPRKGRPT</sequence>
<protein>
    <recommendedName>
        <fullName>Kunitz-type serine protease inhibitor C5</fullName>
    </recommendedName>
    <alternativeName>
        <fullName>BPTI-5</fullName>
    </alternativeName>
    <alternativeName>
        <fullName>Trypsin inhibitor 5</fullName>
    </alternativeName>
    <alternativeName>
        <fullName>Trypsin inhibitor C5</fullName>
    </alternativeName>
</protein>